<accession>A4SDA4</accession>
<name>CLPP_CHLPM</name>
<reference key="1">
    <citation type="submission" date="2007-03" db="EMBL/GenBank/DDBJ databases">
        <title>Complete sequence of Prosthecochloris vibrioformis DSM 265.</title>
        <authorList>
            <consortium name="US DOE Joint Genome Institute"/>
            <person name="Copeland A."/>
            <person name="Lucas S."/>
            <person name="Lapidus A."/>
            <person name="Barry K."/>
            <person name="Detter J.C."/>
            <person name="Glavina del Rio T."/>
            <person name="Hammon N."/>
            <person name="Israni S."/>
            <person name="Pitluck S."/>
            <person name="Schmutz J."/>
            <person name="Larimer F."/>
            <person name="Land M."/>
            <person name="Hauser L."/>
            <person name="Mikhailova N."/>
            <person name="Li T."/>
            <person name="Overmann J."/>
            <person name="Schuster S.C."/>
            <person name="Bryant D.A."/>
            <person name="Richardson P."/>
        </authorList>
    </citation>
    <scope>NUCLEOTIDE SEQUENCE [LARGE SCALE GENOMIC DNA]</scope>
    <source>
        <strain>DSM 265 / 1930</strain>
    </source>
</reference>
<keyword id="KW-0963">Cytoplasm</keyword>
<keyword id="KW-0378">Hydrolase</keyword>
<keyword id="KW-0645">Protease</keyword>
<keyword id="KW-0720">Serine protease</keyword>
<protein>
    <recommendedName>
        <fullName evidence="1">ATP-dependent Clp protease proteolytic subunit</fullName>
        <ecNumber evidence="1">3.4.21.92</ecNumber>
    </recommendedName>
    <alternativeName>
        <fullName evidence="1">Endopeptidase Clp</fullName>
    </alternativeName>
</protein>
<feature type="chain" id="PRO_1000080896" description="ATP-dependent Clp protease proteolytic subunit">
    <location>
        <begin position="1"/>
        <end position="225"/>
    </location>
</feature>
<feature type="active site" description="Nucleophile" evidence="1">
    <location>
        <position position="123"/>
    </location>
</feature>
<feature type="active site" evidence="1">
    <location>
        <position position="148"/>
    </location>
</feature>
<dbReference type="EC" id="3.4.21.92" evidence="1"/>
<dbReference type="EMBL" id="CP000607">
    <property type="protein sequence ID" value="ABP36463.1"/>
    <property type="molecule type" value="Genomic_DNA"/>
</dbReference>
<dbReference type="SMR" id="A4SDA4"/>
<dbReference type="STRING" id="290318.Cvib_0441"/>
<dbReference type="MEROPS" id="S14.001"/>
<dbReference type="KEGG" id="pvi:Cvib_0441"/>
<dbReference type="eggNOG" id="COG0740">
    <property type="taxonomic scope" value="Bacteria"/>
</dbReference>
<dbReference type="HOGENOM" id="CLU_058707_3_2_10"/>
<dbReference type="OrthoDB" id="9802800at2"/>
<dbReference type="GO" id="GO:0005737">
    <property type="term" value="C:cytoplasm"/>
    <property type="evidence" value="ECO:0007669"/>
    <property type="project" value="UniProtKB-SubCell"/>
</dbReference>
<dbReference type="GO" id="GO:0009368">
    <property type="term" value="C:endopeptidase Clp complex"/>
    <property type="evidence" value="ECO:0007669"/>
    <property type="project" value="TreeGrafter"/>
</dbReference>
<dbReference type="GO" id="GO:0004176">
    <property type="term" value="F:ATP-dependent peptidase activity"/>
    <property type="evidence" value="ECO:0007669"/>
    <property type="project" value="InterPro"/>
</dbReference>
<dbReference type="GO" id="GO:0051117">
    <property type="term" value="F:ATPase binding"/>
    <property type="evidence" value="ECO:0007669"/>
    <property type="project" value="TreeGrafter"/>
</dbReference>
<dbReference type="GO" id="GO:0004252">
    <property type="term" value="F:serine-type endopeptidase activity"/>
    <property type="evidence" value="ECO:0007669"/>
    <property type="project" value="UniProtKB-UniRule"/>
</dbReference>
<dbReference type="GO" id="GO:0006515">
    <property type="term" value="P:protein quality control for misfolded or incompletely synthesized proteins"/>
    <property type="evidence" value="ECO:0007669"/>
    <property type="project" value="TreeGrafter"/>
</dbReference>
<dbReference type="CDD" id="cd07017">
    <property type="entry name" value="S14_ClpP_2"/>
    <property type="match status" value="1"/>
</dbReference>
<dbReference type="FunFam" id="3.90.226.10:FF:000001">
    <property type="entry name" value="ATP-dependent Clp protease proteolytic subunit"/>
    <property type="match status" value="1"/>
</dbReference>
<dbReference type="Gene3D" id="3.90.226.10">
    <property type="entry name" value="2-enoyl-CoA Hydratase, Chain A, domain 1"/>
    <property type="match status" value="1"/>
</dbReference>
<dbReference type="HAMAP" id="MF_00444">
    <property type="entry name" value="ClpP"/>
    <property type="match status" value="1"/>
</dbReference>
<dbReference type="InterPro" id="IPR001907">
    <property type="entry name" value="ClpP"/>
</dbReference>
<dbReference type="InterPro" id="IPR029045">
    <property type="entry name" value="ClpP/crotonase-like_dom_sf"/>
</dbReference>
<dbReference type="InterPro" id="IPR023562">
    <property type="entry name" value="ClpP/TepA"/>
</dbReference>
<dbReference type="InterPro" id="IPR033135">
    <property type="entry name" value="ClpP_His_AS"/>
</dbReference>
<dbReference type="InterPro" id="IPR018215">
    <property type="entry name" value="ClpP_Ser_AS"/>
</dbReference>
<dbReference type="NCBIfam" id="TIGR00493">
    <property type="entry name" value="clpP"/>
    <property type="match status" value="1"/>
</dbReference>
<dbReference type="NCBIfam" id="NF001368">
    <property type="entry name" value="PRK00277.1"/>
    <property type="match status" value="1"/>
</dbReference>
<dbReference type="NCBIfam" id="NF009205">
    <property type="entry name" value="PRK12553.1"/>
    <property type="match status" value="1"/>
</dbReference>
<dbReference type="PANTHER" id="PTHR10381">
    <property type="entry name" value="ATP-DEPENDENT CLP PROTEASE PROTEOLYTIC SUBUNIT"/>
    <property type="match status" value="1"/>
</dbReference>
<dbReference type="PANTHER" id="PTHR10381:SF70">
    <property type="entry name" value="ATP-DEPENDENT CLP PROTEASE PROTEOLYTIC SUBUNIT"/>
    <property type="match status" value="1"/>
</dbReference>
<dbReference type="Pfam" id="PF00574">
    <property type="entry name" value="CLP_protease"/>
    <property type="match status" value="1"/>
</dbReference>
<dbReference type="PRINTS" id="PR00127">
    <property type="entry name" value="CLPPROTEASEP"/>
</dbReference>
<dbReference type="SUPFAM" id="SSF52096">
    <property type="entry name" value="ClpP/crotonase"/>
    <property type="match status" value="1"/>
</dbReference>
<dbReference type="PROSITE" id="PS00382">
    <property type="entry name" value="CLP_PROTEASE_HIS"/>
    <property type="match status" value="1"/>
</dbReference>
<dbReference type="PROSITE" id="PS00381">
    <property type="entry name" value="CLP_PROTEASE_SER"/>
    <property type="match status" value="1"/>
</dbReference>
<evidence type="ECO:0000255" key="1">
    <source>
        <dbReference type="HAMAP-Rule" id="MF_00444"/>
    </source>
</evidence>
<gene>
    <name evidence="1" type="primary">clpP</name>
    <name type="ordered locus">Cvib_0441</name>
</gene>
<comment type="function">
    <text evidence="1">Cleaves peptides in various proteins in a process that requires ATP hydrolysis. Has a chymotrypsin-like activity. Plays a major role in the degradation of misfolded proteins.</text>
</comment>
<comment type="catalytic activity">
    <reaction evidence="1">
        <text>Hydrolysis of proteins to small peptides in the presence of ATP and magnesium. alpha-casein is the usual test substrate. In the absence of ATP, only oligopeptides shorter than five residues are hydrolyzed (such as succinyl-Leu-Tyr-|-NHMec, and Leu-Tyr-Leu-|-Tyr-Trp, in which cleavage of the -Tyr-|-Leu- and -Tyr-|-Trp bonds also occurs).</text>
        <dbReference type="EC" id="3.4.21.92"/>
    </reaction>
</comment>
<comment type="subunit">
    <text evidence="1">Fourteen ClpP subunits assemble into 2 heptameric rings which stack back to back to give a disk-like structure with a central cavity, resembling the structure of eukaryotic proteasomes.</text>
</comment>
<comment type="subcellular location">
    <subcellularLocation>
        <location evidence="1">Cytoplasm</location>
    </subcellularLocation>
</comment>
<comment type="similarity">
    <text evidence="1">Belongs to the peptidase S14 family.</text>
</comment>
<proteinExistence type="inferred from homology"/>
<organism>
    <name type="scientific">Chlorobium phaeovibrioides (strain DSM 265 / 1930)</name>
    <name type="common">Prosthecochloris vibrioformis (strain DSM 265)</name>
    <dbReference type="NCBI Taxonomy" id="290318"/>
    <lineage>
        <taxon>Bacteria</taxon>
        <taxon>Pseudomonadati</taxon>
        <taxon>Chlorobiota</taxon>
        <taxon>Chlorobiia</taxon>
        <taxon>Chlorobiales</taxon>
        <taxon>Chlorobiaceae</taxon>
        <taxon>Chlorobium/Pelodictyon group</taxon>
        <taxon>Chlorobium</taxon>
    </lineage>
</organism>
<sequence length="225" mass="24893">MANINFGFEHHASKLYSGAIEEGIQNSLVPMVIETSGRGERAFDIFSRLLRERIIFLGSGIDEHVAGLIMAQLIFLESEDPDRDIFIYVNSPGGSVSAGLGIYDTMQYIRPDVSTVCVGMAASMGAFLLASGAKGKRASLPHSRIMIHQPSGGAQGQESDIIIQAREIEKIRRLLEEIMAKHTGKDVQQVREDSERDRWMDAGEALEYGIIDQVFEKRPAPEKKD</sequence>